<accession>Q9PJY1</accession>
<dbReference type="EMBL" id="AE002160">
    <property type="protein sequence ID" value="AAF39511.1"/>
    <property type="molecule type" value="Genomic_DNA"/>
</dbReference>
<dbReference type="PIR" id="D81675">
    <property type="entry name" value="D81675"/>
</dbReference>
<dbReference type="RefSeq" id="WP_010231245.1">
    <property type="nucleotide sequence ID" value="NZ_CP063055.1"/>
</dbReference>
<dbReference type="GeneID" id="1246056"/>
<dbReference type="KEGG" id="cmu:TC_0695"/>
<dbReference type="eggNOG" id="COG3210">
    <property type="taxonomic scope" value="Bacteria"/>
</dbReference>
<dbReference type="HOGENOM" id="CLU_001452_0_0_0"/>
<dbReference type="OrthoDB" id="198251at2"/>
<dbReference type="Proteomes" id="UP000000800">
    <property type="component" value="Chromosome"/>
</dbReference>
<dbReference type="GO" id="GO:0009279">
    <property type="term" value="C:cell outer membrane"/>
    <property type="evidence" value="ECO:0007669"/>
    <property type="project" value="UniProtKB-SubCell"/>
</dbReference>
<dbReference type="GO" id="GO:0005576">
    <property type="term" value="C:extracellular region"/>
    <property type="evidence" value="ECO:0007669"/>
    <property type="project" value="UniProtKB-KW"/>
</dbReference>
<dbReference type="Gene3D" id="2.40.128.130">
    <property type="entry name" value="Autotransporter beta-domain"/>
    <property type="match status" value="1"/>
</dbReference>
<dbReference type="InterPro" id="IPR005546">
    <property type="entry name" value="Autotransporte_beta"/>
</dbReference>
<dbReference type="InterPro" id="IPR036709">
    <property type="entry name" value="Autotransporte_beta_dom_sf"/>
</dbReference>
<dbReference type="InterPro" id="IPR011427">
    <property type="entry name" value="Polymorphic_membr_middle"/>
</dbReference>
<dbReference type="InterPro" id="IPR003368">
    <property type="entry name" value="POMP_repeat"/>
</dbReference>
<dbReference type="NCBIfam" id="TIGR01376">
    <property type="entry name" value="POMP_repeat"/>
    <property type="match status" value="3"/>
</dbReference>
<dbReference type="Pfam" id="PF03797">
    <property type="entry name" value="Autotransporter"/>
    <property type="match status" value="1"/>
</dbReference>
<dbReference type="Pfam" id="PF02415">
    <property type="entry name" value="Chlam_PMP"/>
    <property type="match status" value="2"/>
</dbReference>
<dbReference type="Pfam" id="PF07548">
    <property type="entry name" value="ChlamPMP_M"/>
    <property type="match status" value="1"/>
</dbReference>
<dbReference type="SMART" id="SM00869">
    <property type="entry name" value="Autotransporter"/>
    <property type="match status" value="1"/>
</dbReference>
<dbReference type="SUPFAM" id="SSF103515">
    <property type="entry name" value="Autotransporter"/>
    <property type="match status" value="1"/>
</dbReference>
<dbReference type="PROSITE" id="PS51208">
    <property type="entry name" value="AUTOTRANSPORTER"/>
    <property type="match status" value="1"/>
</dbReference>
<sequence>MKFLSATAVFAAALPSITSASSVESQIETKDLNSSRTGSSSSQSFTEIIPENGAEYRVSGDVSFSDFSNIPEEAETLAISHKEQPNNEVVLSEENHQASFQDSAQNQTENASEGNSPNSENTNQSSTTETESITTDEQVQNDNESAASVPTTVETATAMRLPSYHLQTESLVEGATEEDQNQPNSQNTSSGGGAFYNSQQGPLSFINDPDKDSSLTLSKIRVIGEGGAIYSKGPLSITGLKKLALKENLSQKAGGAICAESTISISSVDSIIFSKNTVTPPAANKPELPNDPSGSNGNDGSDDSNSSGNTDSNESNPNNSASNNTGSENELSSSTPSAQLPNPATPFLSSVSTNSQPIDTEPENAWHAESGSGGAIYSKGKLSIASSKEVVFDHNSATKNGGAIFGEEEIALEKIASLKFDSNTTGEKGGAIHAKTVTLSDIKNTLIFVNNTAKTPEENSLKSSQLNNQNPSEEEHQDTSEGEESQSLETSPITNQDSASSHVAIFRSIAASSSQSNSENIPNADGSTSAGGDAGSSSQPSTPGSDSSINHVIGGGAIYGEAVKIENLSGYGTFSNNNAVDHQISGSTSDVLGGAIYAKTSLTIDSGNSSGTITFSENTTSSKSTTGQVAGGAIFSPSVTITTPVTFSKNSAINATTSSKKDTFGGAIGAISTVSLSKGARFSENIADLGSAIGLVPTTQDAETVQLTTGSYYFEKNKALKRATVYAPIVSIKAHTATFDQNISAEEGSAIYFTKEATIESLGSVLFTGNLVTPIQSTTVLTSGNTSKYGAAIFGQIANASGSQTDNLPLKLIASGGNISFRNNEYRPDATNTGQSTFCSIAGDIKLTMQAAEGKVISFFDAIRTSTKKTGTLASAYDTLDINKSNDSGSINSAFTGTIMFSSELHENKSYIPQNVVLHSGSLILKANTELHVLSFDQKEGSSLIMEPGSVLSNQDIADGSLVVNSLTIDLSSVGRNSASGDNIFMPPELRIVDTSTNSGNSSSTPPSSNTPPNSTPTAQAPISKNFAATTTTPTTPPTTGNIVFLNGVIKLIDPNGTFFQNPALGSDQKISLLVLPSDQTKLQAQKVVLTGDISPKKGYTGTLTLDPQQLQNGVIQALWTFKSYRQWAYIPRDNHFYANSILGSQMSMATVKQGLINDKLNLARFDEVAYNNLWISGLGTMLSQRGGQRSEEMTYYSRGASVALDAKPTQDLIIGAAFSKMIGRSKSLKLERNYTHKGSEYSYQASVYGGSPFYLTINKEAGRSLPLLLQGVISYGYIKHDTVTHYPTIRELNKGEWEDLGWLTALRVSSILKTPKQGDSKRITVYGEVEYSSIRQKQFTETEYDPRYFSNCTYRNLAVPVGLALEGEFKGNDILMYNRFSVAYMPSIYRNSPVCKYQVLSSGEGGEIVCGVPTRNSSRAEYSTQLYLGPLWTLYGSYTLEADAHTLANMINCGARMTF</sequence>
<feature type="signal peptide" evidence="1">
    <location>
        <begin position="1"/>
        <end position="20"/>
    </location>
</feature>
<feature type="chain" id="PRO_0000024720" description="Probable outer membrane protein PmpC">
    <location>
        <begin position="21"/>
        <end position="1460"/>
    </location>
</feature>
<feature type="domain" description="Autotransporter" evidence="2">
    <location>
        <begin position="1167"/>
        <end position="1460"/>
    </location>
</feature>
<feature type="region of interest" description="Disordered" evidence="3">
    <location>
        <begin position="21"/>
        <end position="48"/>
    </location>
</feature>
<feature type="region of interest" description="Disordered" evidence="3">
    <location>
        <begin position="92"/>
        <end position="212"/>
    </location>
</feature>
<feature type="region of interest" description="Disordered" evidence="3">
    <location>
        <begin position="279"/>
        <end position="372"/>
    </location>
</feature>
<feature type="region of interest" description="Disordered" evidence="3">
    <location>
        <begin position="455"/>
        <end position="549"/>
    </location>
</feature>
<feature type="region of interest" description="Disordered" evidence="3">
    <location>
        <begin position="993"/>
        <end position="1021"/>
    </location>
</feature>
<feature type="compositionally biased region" description="Low complexity" evidence="3">
    <location>
        <begin position="34"/>
        <end position="44"/>
    </location>
</feature>
<feature type="compositionally biased region" description="Polar residues" evidence="3">
    <location>
        <begin position="97"/>
        <end position="114"/>
    </location>
</feature>
<feature type="compositionally biased region" description="Low complexity" evidence="3">
    <location>
        <begin position="115"/>
        <end position="137"/>
    </location>
</feature>
<feature type="compositionally biased region" description="Polar residues" evidence="3">
    <location>
        <begin position="138"/>
        <end position="155"/>
    </location>
</feature>
<feature type="compositionally biased region" description="Low complexity" evidence="3">
    <location>
        <begin position="290"/>
        <end position="327"/>
    </location>
</feature>
<feature type="compositionally biased region" description="Polar residues" evidence="3">
    <location>
        <begin position="328"/>
        <end position="358"/>
    </location>
</feature>
<feature type="compositionally biased region" description="Low complexity" evidence="3">
    <location>
        <begin position="461"/>
        <end position="471"/>
    </location>
</feature>
<feature type="compositionally biased region" description="Polar residues" evidence="3">
    <location>
        <begin position="487"/>
        <end position="501"/>
    </location>
</feature>
<feature type="compositionally biased region" description="Low complexity" evidence="3">
    <location>
        <begin position="504"/>
        <end position="548"/>
    </location>
</feature>
<feature type="compositionally biased region" description="Low complexity" evidence="3">
    <location>
        <begin position="995"/>
        <end position="1018"/>
    </location>
</feature>
<name>PMPC_CHLMU</name>
<organism>
    <name type="scientific">Chlamydia muridarum (strain MoPn / Nigg)</name>
    <dbReference type="NCBI Taxonomy" id="243161"/>
    <lineage>
        <taxon>Bacteria</taxon>
        <taxon>Pseudomonadati</taxon>
        <taxon>Chlamydiota</taxon>
        <taxon>Chlamydiia</taxon>
        <taxon>Chlamydiales</taxon>
        <taxon>Chlamydiaceae</taxon>
        <taxon>Chlamydia/Chlamydophila group</taxon>
        <taxon>Chlamydia</taxon>
    </lineage>
</organism>
<proteinExistence type="evidence at transcript level"/>
<reference key="1">
    <citation type="journal article" date="2000" name="Nucleic Acids Res.">
        <title>Genome sequences of Chlamydia trachomatis MoPn and Chlamydia pneumoniae AR39.</title>
        <authorList>
            <person name="Read T.D."/>
            <person name="Brunham R.C."/>
            <person name="Shen C."/>
            <person name="Gill S.R."/>
            <person name="Heidelberg J.F."/>
            <person name="White O."/>
            <person name="Hickey E.K."/>
            <person name="Peterson J.D."/>
            <person name="Utterback T.R."/>
            <person name="Berry K.J."/>
            <person name="Bass S."/>
            <person name="Linher K.D."/>
            <person name="Weidman J.F."/>
            <person name="Khouri H.M."/>
            <person name="Craven B."/>
            <person name="Bowman C."/>
            <person name="Dodson R.J."/>
            <person name="Gwinn M.L."/>
            <person name="Nelson W.C."/>
            <person name="DeBoy R.T."/>
            <person name="Kolonay J.F."/>
            <person name="McClarty G."/>
            <person name="Salzberg S.L."/>
            <person name="Eisen J.A."/>
            <person name="Fraser C.M."/>
        </authorList>
    </citation>
    <scope>NUCLEOTIDE SEQUENCE [LARGE SCALE GENOMIC DNA]</scope>
    <source>
        <strain>MoPn / Nigg</strain>
    </source>
</reference>
<gene>
    <name type="primary">pmpC</name>
    <name type="ordered locus">TC_0695</name>
</gene>
<keyword id="KW-0998">Cell outer membrane</keyword>
<keyword id="KW-0134">Cell wall</keyword>
<keyword id="KW-0472">Membrane</keyword>
<keyword id="KW-0964">Secreted</keyword>
<keyword id="KW-0732">Signal</keyword>
<keyword id="KW-0812">Transmembrane</keyword>
<keyword id="KW-1134">Transmembrane beta strand</keyword>
<comment type="subcellular location">
    <subcellularLocation>
        <location>Secreted</location>
        <location>Cell wall</location>
    </subcellularLocation>
    <subcellularLocation>
        <location evidence="4">Cell outer membrane</location>
        <topology evidence="4">Peripheral membrane protein</topology>
        <orientation evidence="4">Extracellular side</orientation>
    </subcellularLocation>
</comment>
<comment type="developmental stage">
    <text>Elementary body.</text>
</comment>
<comment type="similarity">
    <text evidence="4">Belongs to the PMP outer membrane protein family.</text>
</comment>
<evidence type="ECO:0000255" key="1"/>
<evidence type="ECO:0000255" key="2">
    <source>
        <dbReference type="PROSITE-ProRule" id="PRU00556"/>
    </source>
</evidence>
<evidence type="ECO:0000256" key="3">
    <source>
        <dbReference type="SAM" id="MobiDB-lite"/>
    </source>
</evidence>
<evidence type="ECO:0000305" key="4"/>
<protein>
    <recommendedName>
        <fullName>Probable outer membrane protein PmpC</fullName>
    </recommendedName>
    <alternativeName>
        <fullName>Polymorphic membrane protein C</fullName>
    </alternativeName>
</protein>